<evidence type="ECO:0000255" key="1">
    <source>
        <dbReference type="PROSITE-ProRule" id="PRU00319"/>
    </source>
</evidence>
<reference key="1">
    <citation type="journal article" date="2003" name="Mol. Microbiol.">
        <title>An integrated analysis of the genome of the hyperthermophilic archaeon Pyrococcus abyssi.</title>
        <authorList>
            <person name="Cohen G.N."/>
            <person name="Barbe V."/>
            <person name="Flament D."/>
            <person name="Galperin M."/>
            <person name="Heilig R."/>
            <person name="Lecompte O."/>
            <person name="Poch O."/>
            <person name="Prieur D."/>
            <person name="Querellou J."/>
            <person name="Ripp R."/>
            <person name="Thierry J.-C."/>
            <person name="Van der Oost J."/>
            <person name="Weissenbach J."/>
            <person name="Zivanovic Y."/>
            <person name="Forterre P."/>
        </authorList>
    </citation>
    <scope>NUCLEOTIDE SEQUENCE [LARGE SCALE GENOMIC DNA]</scope>
    <source>
        <strain>GE5 / Orsay</strain>
    </source>
</reference>
<reference key="2">
    <citation type="journal article" date="2012" name="Curr. Microbiol.">
        <title>Re-annotation of two hyperthermophilic archaea Pyrococcus abyssi GE5 and Pyrococcus furiosus DSM 3638.</title>
        <authorList>
            <person name="Gao J."/>
            <person name="Wang J."/>
        </authorList>
    </citation>
    <scope>GENOME REANNOTATION</scope>
    <source>
        <strain>GE5 / Orsay</strain>
    </source>
</reference>
<sequence>MAEILDKVDRRLLEELKINARENIATLSKKLGIPRTTVHYRIKRLVEEGIIERFTIKPNYKKLNLGTTAFILIRYDPDSGLTQRQVAEQIAKIPGVYEVHIIAGEWDLLLKVRASNAEEVGRIVIDKLREIRGVGQTVTMVSFDTVKEEI</sequence>
<dbReference type="EMBL" id="AJ248288">
    <property type="protein sequence ID" value="CAB50596.1"/>
    <property type="molecule type" value="Genomic_DNA"/>
</dbReference>
<dbReference type="EMBL" id="HE613800">
    <property type="protein sequence ID" value="CCE71162.1"/>
    <property type="molecule type" value="Genomic_DNA"/>
</dbReference>
<dbReference type="PIR" id="F75019">
    <property type="entry name" value="F75019"/>
</dbReference>
<dbReference type="RefSeq" id="WP_010868810.1">
    <property type="nucleotide sequence ID" value="NC_000868.1"/>
</dbReference>
<dbReference type="SMR" id="Q9UY16"/>
<dbReference type="STRING" id="272844.PAB1236"/>
<dbReference type="KEGG" id="pab:PAB1236"/>
<dbReference type="PATRIC" id="fig|272844.11.peg.1808"/>
<dbReference type="eggNOG" id="arCOG01580">
    <property type="taxonomic scope" value="Archaea"/>
</dbReference>
<dbReference type="HOGENOM" id="CLU_091233_5_4_2"/>
<dbReference type="OrthoDB" id="6762at2157"/>
<dbReference type="PhylomeDB" id="Q9UY16"/>
<dbReference type="Proteomes" id="UP000000810">
    <property type="component" value="Chromosome"/>
</dbReference>
<dbReference type="Proteomes" id="UP000009139">
    <property type="component" value="Chromosome"/>
</dbReference>
<dbReference type="GO" id="GO:0005829">
    <property type="term" value="C:cytosol"/>
    <property type="evidence" value="ECO:0007669"/>
    <property type="project" value="TreeGrafter"/>
</dbReference>
<dbReference type="GO" id="GO:0043565">
    <property type="term" value="F:sequence-specific DNA binding"/>
    <property type="evidence" value="ECO:0007669"/>
    <property type="project" value="InterPro"/>
</dbReference>
<dbReference type="GO" id="GO:0043200">
    <property type="term" value="P:response to amino acid"/>
    <property type="evidence" value="ECO:0007669"/>
    <property type="project" value="TreeGrafter"/>
</dbReference>
<dbReference type="CDD" id="cd00090">
    <property type="entry name" value="HTH_ARSR"/>
    <property type="match status" value="1"/>
</dbReference>
<dbReference type="Gene3D" id="3.30.70.920">
    <property type="match status" value="1"/>
</dbReference>
<dbReference type="Gene3D" id="1.10.10.10">
    <property type="entry name" value="Winged helix-like DNA-binding domain superfamily/Winged helix DNA-binding domain"/>
    <property type="match status" value="1"/>
</dbReference>
<dbReference type="InterPro" id="IPR011991">
    <property type="entry name" value="ArsR-like_HTH"/>
</dbReference>
<dbReference type="InterPro" id="IPR000485">
    <property type="entry name" value="AsnC-type_HTH_dom"/>
</dbReference>
<dbReference type="InterPro" id="IPR011008">
    <property type="entry name" value="Dimeric_a/b-barrel"/>
</dbReference>
<dbReference type="InterPro" id="IPR019888">
    <property type="entry name" value="Tscrpt_reg_AsnC-like"/>
</dbReference>
<dbReference type="InterPro" id="IPR019887">
    <property type="entry name" value="Tscrpt_reg_AsnC/Lrp_C"/>
</dbReference>
<dbReference type="InterPro" id="IPR036388">
    <property type="entry name" value="WH-like_DNA-bd_sf"/>
</dbReference>
<dbReference type="InterPro" id="IPR036390">
    <property type="entry name" value="WH_DNA-bd_sf"/>
</dbReference>
<dbReference type="PANTHER" id="PTHR30154">
    <property type="entry name" value="LEUCINE-RESPONSIVE REGULATORY PROTEIN"/>
    <property type="match status" value="1"/>
</dbReference>
<dbReference type="PANTHER" id="PTHR30154:SF34">
    <property type="entry name" value="TRANSCRIPTIONAL REGULATOR AZLB"/>
    <property type="match status" value="1"/>
</dbReference>
<dbReference type="Pfam" id="PF01037">
    <property type="entry name" value="AsnC_trans_reg"/>
    <property type="match status" value="1"/>
</dbReference>
<dbReference type="Pfam" id="PF13412">
    <property type="entry name" value="HTH_24"/>
    <property type="match status" value="1"/>
</dbReference>
<dbReference type="PRINTS" id="PR00033">
    <property type="entry name" value="HTHASNC"/>
</dbReference>
<dbReference type="SMART" id="SM00344">
    <property type="entry name" value="HTH_ASNC"/>
    <property type="match status" value="1"/>
</dbReference>
<dbReference type="SUPFAM" id="SSF54909">
    <property type="entry name" value="Dimeric alpha+beta barrel"/>
    <property type="match status" value="1"/>
</dbReference>
<dbReference type="SUPFAM" id="SSF46785">
    <property type="entry name" value="Winged helix' DNA-binding domain"/>
    <property type="match status" value="1"/>
</dbReference>
<dbReference type="PROSITE" id="PS50956">
    <property type="entry name" value="HTH_ASNC_2"/>
    <property type="match status" value="1"/>
</dbReference>
<keyword id="KW-0238">DNA-binding</keyword>
<keyword id="KW-0804">Transcription</keyword>
<keyword id="KW-0805">Transcription regulation</keyword>
<organism>
    <name type="scientific">Pyrococcus abyssi (strain GE5 / Orsay)</name>
    <dbReference type="NCBI Taxonomy" id="272844"/>
    <lineage>
        <taxon>Archaea</taxon>
        <taxon>Methanobacteriati</taxon>
        <taxon>Methanobacteriota</taxon>
        <taxon>Thermococci</taxon>
        <taxon>Thermococcales</taxon>
        <taxon>Thermococcaceae</taxon>
        <taxon>Pyrococcus</taxon>
    </lineage>
</organism>
<name>REG9_PYRAB</name>
<feature type="chain" id="PRO_0000111776" description="Uncharacterized HTH-type transcriptional regulator PYRAB16920">
    <location>
        <begin position="1"/>
        <end position="150"/>
    </location>
</feature>
<feature type="domain" description="HTH asnC-type" evidence="1">
    <location>
        <begin position="5"/>
        <end position="66"/>
    </location>
</feature>
<feature type="DNA-binding region" description="H-T-H motif" evidence="1">
    <location>
        <begin position="24"/>
        <end position="43"/>
    </location>
</feature>
<gene>
    <name type="ordered locus">PYRAB16920</name>
    <name type="ORF">PAB1236</name>
</gene>
<protein>
    <recommendedName>
        <fullName>Uncharacterized HTH-type transcriptional regulator PYRAB16920</fullName>
    </recommendedName>
</protein>
<accession>Q9UY16</accession>
<accession>G8ZK55</accession>
<proteinExistence type="predicted"/>